<dbReference type="EMBL" id="AK007700">
    <property type="protein sequence ID" value="BAB25198.1"/>
    <property type="molecule type" value="mRNA"/>
</dbReference>
<dbReference type="EMBL" id="AK169273">
    <property type="protein sequence ID" value="BAE41033.1"/>
    <property type="molecule type" value="mRNA"/>
</dbReference>
<dbReference type="EMBL" id="AK170165">
    <property type="protein sequence ID" value="BAE41611.1"/>
    <property type="molecule type" value="mRNA"/>
</dbReference>
<dbReference type="EMBL" id="BC021362">
    <property type="protein sequence ID" value="AAH21362.1"/>
    <property type="molecule type" value="mRNA"/>
</dbReference>
<dbReference type="CCDS" id="CCDS19250.1">
    <molecule id="Q8VDS8-1"/>
</dbReference>
<dbReference type="CCDS" id="CCDS71583.1">
    <molecule id="Q8VDS8-3"/>
</dbReference>
<dbReference type="CCDS" id="CCDS80270.1">
    <molecule id="Q8VDS8-2"/>
</dbReference>
<dbReference type="RefSeq" id="NP_001276464.1">
    <molecule id="Q8VDS8-3"/>
    <property type="nucleotide sequence ID" value="NM_001289535.1"/>
</dbReference>
<dbReference type="RefSeq" id="NP_001276465.1">
    <molecule id="Q8VDS8-2"/>
    <property type="nucleotide sequence ID" value="NM_001289536.1"/>
</dbReference>
<dbReference type="RefSeq" id="NP_081235.2">
    <molecule id="Q8VDS8-1"/>
    <property type="nucleotide sequence ID" value="NM_026959.3"/>
</dbReference>
<dbReference type="SMR" id="Q8VDS8"/>
<dbReference type="BioGRID" id="214485">
    <property type="interactions" value="1"/>
</dbReference>
<dbReference type="FunCoup" id="Q8VDS8">
    <property type="interactions" value="3055"/>
</dbReference>
<dbReference type="STRING" id="10090.ENSMUSP00000109761"/>
<dbReference type="iPTMnet" id="Q8VDS8"/>
<dbReference type="PhosphoSitePlus" id="Q8VDS8"/>
<dbReference type="SwissPalm" id="Q8VDS8"/>
<dbReference type="PaxDb" id="10090-ENSMUSP00000109761"/>
<dbReference type="PeptideAtlas" id="Q8VDS8"/>
<dbReference type="ProteomicsDB" id="257468">
    <molecule id="Q8VDS8-1"/>
</dbReference>
<dbReference type="ProteomicsDB" id="257469">
    <molecule id="Q8VDS8-2"/>
</dbReference>
<dbReference type="ProteomicsDB" id="257470">
    <molecule id="Q8VDS8-3"/>
</dbReference>
<dbReference type="Pumba" id="Q8VDS8"/>
<dbReference type="Antibodypedia" id="727">
    <property type="antibodies" value="143 antibodies from 25 providers"/>
</dbReference>
<dbReference type="DNASU" id="71116"/>
<dbReference type="Ensembl" id="ENSMUST00000031008.13">
    <molecule id="Q8VDS8-3"/>
    <property type="protein sequence ID" value="ENSMUSP00000031008.7"/>
    <property type="gene ID" value="ENSMUSG00000029125.15"/>
</dbReference>
<dbReference type="Ensembl" id="ENSMUST00000042146.15">
    <molecule id="Q8VDS8-2"/>
    <property type="protein sequence ID" value="ENSMUSP00000038205.9"/>
    <property type="gene ID" value="ENSMUSG00000029125.15"/>
</dbReference>
<dbReference type="Ensembl" id="ENSMUST00000114126.9">
    <molecule id="Q8VDS8-1"/>
    <property type="protein sequence ID" value="ENSMUSP00000109761.3"/>
    <property type="gene ID" value="ENSMUSG00000029125.15"/>
</dbReference>
<dbReference type="GeneID" id="71116"/>
<dbReference type="KEGG" id="mmu:71116"/>
<dbReference type="UCSC" id="uc008xfx.2">
    <molecule id="Q8VDS8-3"/>
    <property type="organism name" value="mouse"/>
</dbReference>
<dbReference type="UCSC" id="uc008xfy.2">
    <molecule id="Q8VDS8-1"/>
    <property type="organism name" value="mouse"/>
</dbReference>
<dbReference type="UCSC" id="uc008xfz.2">
    <molecule id="Q8VDS8-2"/>
    <property type="organism name" value="mouse"/>
</dbReference>
<dbReference type="AGR" id="MGI:1918366"/>
<dbReference type="CTD" id="53407"/>
<dbReference type="MGI" id="MGI:1918366">
    <property type="gene designation" value="Stx18"/>
</dbReference>
<dbReference type="VEuPathDB" id="HostDB:ENSMUSG00000029125"/>
<dbReference type="eggNOG" id="KOG3894">
    <property type="taxonomic scope" value="Eukaryota"/>
</dbReference>
<dbReference type="GeneTree" id="ENSGT00390000014853"/>
<dbReference type="HOGENOM" id="CLU_071402_1_0_1"/>
<dbReference type="InParanoid" id="Q8VDS8"/>
<dbReference type="OMA" id="FVFQCRE"/>
<dbReference type="OrthoDB" id="342981at2759"/>
<dbReference type="PhylomeDB" id="Q8VDS8"/>
<dbReference type="TreeFam" id="TF105868"/>
<dbReference type="Reactome" id="R-MMU-6811434">
    <property type="pathway name" value="COPI-dependent Golgi-to-ER retrograde traffic"/>
</dbReference>
<dbReference type="BioGRID-ORCS" id="71116">
    <property type="hits" value="18 hits in 77 CRISPR screens"/>
</dbReference>
<dbReference type="ChiTaRS" id="Stx18">
    <property type="organism name" value="mouse"/>
</dbReference>
<dbReference type="PRO" id="PR:Q8VDS8"/>
<dbReference type="Proteomes" id="UP000000589">
    <property type="component" value="Chromosome 5"/>
</dbReference>
<dbReference type="RNAct" id="Q8VDS8">
    <property type="molecule type" value="protein"/>
</dbReference>
<dbReference type="Bgee" id="ENSMUSG00000029125">
    <property type="expression patterns" value="Expressed in calcareous tooth and 275 other cell types or tissues"/>
</dbReference>
<dbReference type="ExpressionAtlas" id="Q8VDS8">
    <property type="expression patterns" value="baseline and differential"/>
</dbReference>
<dbReference type="GO" id="GO:0005789">
    <property type="term" value="C:endoplasmic reticulum membrane"/>
    <property type="evidence" value="ECO:0007669"/>
    <property type="project" value="UniProtKB-SubCell"/>
</dbReference>
<dbReference type="GO" id="GO:0000139">
    <property type="term" value="C:Golgi membrane"/>
    <property type="evidence" value="ECO:0007669"/>
    <property type="project" value="UniProtKB-SubCell"/>
</dbReference>
<dbReference type="GO" id="GO:0019904">
    <property type="term" value="F:protein domain specific binding"/>
    <property type="evidence" value="ECO:0000353"/>
    <property type="project" value="AgBase"/>
</dbReference>
<dbReference type="GO" id="GO:0005484">
    <property type="term" value="F:SNAP receptor activity"/>
    <property type="evidence" value="ECO:0007669"/>
    <property type="project" value="InterPro"/>
</dbReference>
<dbReference type="GO" id="GO:0090158">
    <property type="term" value="P:endoplasmic reticulum membrane organization"/>
    <property type="evidence" value="ECO:0007669"/>
    <property type="project" value="Ensembl"/>
</dbReference>
<dbReference type="GO" id="GO:0006886">
    <property type="term" value="P:intracellular protein transport"/>
    <property type="evidence" value="ECO:0007669"/>
    <property type="project" value="InterPro"/>
</dbReference>
<dbReference type="GO" id="GO:1902953">
    <property type="term" value="P:positive regulation of ER to Golgi vesicle-mediated transport"/>
    <property type="evidence" value="ECO:0007669"/>
    <property type="project" value="Ensembl"/>
</dbReference>
<dbReference type="GO" id="GO:1902117">
    <property type="term" value="P:positive regulation of organelle assembly"/>
    <property type="evidence" value="ECO:0007669"/>
    <property type="project" value="Ensembl"/>
</dbReference>
<dbReference type="GO" id="GO:1903358">
    <property type="term" value="P:regulation of Golgi organization"/>
    <property type="evidence" value="ECO:0007669"/>
    <property type="project" value="Ensembl"/>
</dbReference>
<dbReference type="GO" id="GO:0016192">
    <property type="term" value="P:vesicle-mediated transport"/>
    <property type="evidence" value="ECO:0007669"/>
    <property type="project" value="UniProtKB-KW"/>
</dbReference>
<dbReference type="CDD" id="cd15850">
    <property type="entry name" value="SNARE_syntaxin18"/>
    <property type="match status" value="1"/>
</dbReference>
<dbReference type="FunFam" id="1.20.5.110:FF:000015">
    <property type="entry name" value="Syntaxin-18, putative"/>
    <property type="match status" value="1"/>
</dbReference>
<dbReference type="Gene3D" id="1.20.5.110">
    <property type="match status" value="1"/>
</dbReference>
<dbReference type="InterPro" id="IPR019529">
    <property type="entry name" value="Syntaxin-18_N"/>
</dbReference>
<dbReference type="InterPro" id="IPR006012">
    <property type="entry name" value="Syntaxin/epimorphin_CS"/>
</dbReference>
<dbReference type="PANTHER" id="PTHR15959">
    <property type="entry name" value="SYNTAXIN-18"/>
    <property type="match status" value="1"/>
</dbReference>
<dbReference type="PANTHER" id="PTHR15959:SF0">
    <property type="entry name" value="SYNTAXIN-18"/>
    <property type="match status" value="1"/>
</dbReference>
<dbReference type="Pfam" id="PF10496">
    <property type="entry name" value="Syntaxin-18_N"/>
    <property type="match status" value="1"/>
</dbReference>
<dbReference type="SUPFAM" id="SSF58038">
    <property type="entry name" value="SNARE fusion complex"/>
    <property type="match status" value="1"/>
</dbReference>
<dbReference type="PROSITE" id="PS00914">
    <property type="entry name" value="SYNTAXIN"/>
    <property type="match status" value="1"/>
</dbReference>
<organism>
    <name type="scientific">Mus musculus</name>
    <name type="common">Mouse</name>
    <dbReference type="NCBI Taxonomy" id="10090"/>
    <lineage>
        <taxon>Eukaryota</taxon>
        <taxon>Metazoa</taxon>
        <taxon>Chordata</taxon>
        <taxon>Craniata</taxon>
        <taxon>Vertebrata</taxon>
        <taxon>Euteleostomi</taxon>
        <taxon>Mammalia</taxon>
        <taxon>Eutheria</taxon>
        <taxon>Euarchontoglires</taxon>
        <taxon>Glires</taxon>
        <taxon>Rodentia</taxon>
        <taxon>Myomorpha</taxon>
        <taxon>Muroidea</taxon>
        <taxon>Muridae</taxon>
        <taxon>Murinae</taxon>
        <taxon>Mus</taxon>
        <taxon>Mus</taxon>
    </lineage>
</organism>
<name>STX18_MOUSE</name>
<protein>
    <recommendedName>
        <fullName>Syntaxin-18</fullName>
    </recommendedName>
</protein>
<comment type="function">
    <text evidence="1">Syntaxin that may be involved in targeting and fusion of Golgi-derived retrograde transport vesicles with the ER.</text>
</comment>
<comment type="subunit">
    <text evidence="1">Component of a SNARE complex consisting of STX18, USE1L, BNIP1/SEC20L, and SEC22B. RINT1/TIP20L and ZW10 are associated with the complex through interaction with BNIP1/SEC20L. Interacts directly with USE1L and BNIP1/SEC20L (By similarity).</text>
</comment>
<comment type="subcellular location">
    <subcellularLocation>
        <location evidence="1">Endoplasmic reticulum membrane</location>
        <topology evidence="1">Single-pass type IV membrane protein</topology>
    </subcellularLocation>
    <subcellularLocation>
        <location evidence="6">Golgi apparatus membrane</location>
        <topology evidence="6">Single-pass type IV membrane protein</topology>
    </subcellularLocation>
</comment>
<comment type="alternative products">
    <event type="alternative splicing"/>
    <isoform>
        <id>Q8VDS8-1</id>
        <name>1</name>
        <sequence type="displayed"/>
    </isoform>
    <isoform>
        <id>Q8VDS8-2</id>
        <name>2</name>
        <sequence type="described" ref="VSP_017902"/>
    </isoform>
    <isoform>
        <id>Q8VDS8-3</id>
        <name>3</name>
        <sequence type="described" ref="VSP_017903 VSP_017904"/>
    </isoform>
</comment>
<comment type="similarity">
    <text evidence="6">Belongs to the syntaxin family.</text>
</comment>
<gene>
    <name type="primary">Stx18</name>
</gene>
<feature type="chain" id="PRO_0000210232" description="Syntaxin-18">
    <location>
        <begin position="1"/>
        <end position="334"/>
    </location>
</feature>
<feature type="topological domain" description="Cytoplasmic" evidence="2">
    <location>
        <begin position="1"/>
        <end position="308"/>
    </location>
</feature>
<feature type="transmembrane region" description="Helical; Anchor for type IV membrane protein" evidence="2">
    <location>
        <begin position="309"/>
        <end position="329"/>
    </location>
</feature>
<feature type="topological domain" description="Lumenal" evidence="2">
    <location>
        <begin position="330"/>
        <end position="334"/>
    </location>
</feature>
<feature type="domain" description="t-SNARE coiled-coil homology">
    <location>
        <begin position="242"/>
        <end position="304"/>
    </location>
</feature>
<feature type="region of interest" description="Disordered" evidence="3">
    <location>
        <begin position="29"/>
        <end position="50"/>
    </location>
</feature>
<feature type="region of interest" description="Disordered" evidence="3">
    <location>
        <begin position="166"/>
        <end position="225"/>
    </location>
</feature>
<feature type="compositionally biased region" description="Basic and acidic residues" evidence="3">
    <location>
        <begin position="33"/>
        <end position="50"/>
    </location>
</feature>
<feature type="compositionally biased region" description="Basic and acidic residues" evidence="3">
    <location>
        <begin position="166"/>
        <end position="182"/>
    </location>
</feature>
<feature type="compositionally biased region" description="Polar residues" evidence="3">
    <location>
        <begin position="183"/>
        <end position="192"/>
    </location>
</feature>
<feature type="compositionally biased region" description="Basic and acidic residues" evidence="3">
    <location>
        <begin position="193"/>
        <end position="207"/>
    </location>
</feature>
<feature type="splice variant" id="VSP_017902" description="In isoform 2." evidence="4">
    <original>AHKEIHSQQVKEHRTAVLDFVDDYLKR</original>
    <variation>G</variation>
    <location>
        <begin position="118"/>
        <end position="144"/>
    </location>
</feature>
<feature type="splice variant" id="VSP_017903" description="In isoform 3." evidence="5">
    <original>AIKNN</original>
    <variation>LAHQG</variation>
    <location>
        <begin position="304"/>
        <end position="308"/>
    </location>
</feature>
<feature type="splice variant" id="VSP_017904" description="In isoform 3." evidence="5">
    <location>
        <begin position="309"/>
        <end position="334"/>
    </location>
</feature>
<feature type="sequence conflict" description="In Ref. 2; AAH21362." evidence="6" ref="2">
    <original>H</original>
    <variation>Q</variation>
    <location>
        <position position="112"/>
    </location>
</feature>
<feature type="sequence conflict" description="In Ref. 2; AAH21362." evidence="6" ref="2">
    <original>A</original>
    <variation>V</variation>
    <location>
        <position position="189"/>
    </location>
</feature>
<sequence>MAVDITLLFRASVKTVKTRNKALGVAVGGGADGSRDELFRRSPRPKGDFSSRAREVISHIGKLRDFLLEHRKEYINAYSHTMSDYGRMTDTERDQIDQDAQIFIRTCSEAIHQLRTEAHKEIHSQQVKEHRTAVLDFVDDYLKRVCKLYSEQRAIRVKRVVDKKRLSKLEPEPHTKRKDSTSEKAPQNASQDSEGKPAAEELPEKPLAESQPELGTWGDGKGEDELSPEEIQMFEQENQRLIGEMNSLFDEVRQIEGKVVEISRLQEIFTEKVLQQETEIDSIHQLVVGATENIKEGNEDIREAIKNNAGFRVWILFFLVMCSFSLLFLDWYDS</sequence>
<reference key="1">
    <citation type="journal article" date="2005" name="Science">
        <title>The transcriptional landscape of the mammalian genome.</title>
        <authorList>
            <person name="Carninci P."/>
            <person name="Kasukawa T."/>
            <person name="Katayama S."/>
            <person name="Gough J."/>
            <person name="Frith M.C."/>
            <person name="Maeda N."/>
            <person name="Oyama R."/>
            <person name="Ravasi T."/>
            <person name="Lenhard B."/>
            <person name="Wells C."/>
            <person name="Kodzius R."/>
            <person name="Shimokawa K."/>
            <person name="Bajic V.B."/>
            <person name="Brenner S.E."/>
            <person name="Batalov S."/>
            <person name="Forrest A.R."/>
            <person name="Zavolan M."/>
            <person name="Davis M.J."/>
            <person name="Wilming L.G."/>
            <person name="Aidinis V."/>
            <person name="Allen J.E."/>
            <person name="Ambesi-Impiombato A."/>
            <person name="Apweiler R."/>
            <person name="Aturaliya R.N."/>
            <person name="Bailey T.L."/>
            <person name="Bansal M."/>
            <person name="Baxter L."/>
            <person name="Beisel K.W."/>
            <person name="Bersano T."/>
            <person name="Bono H."/>
            <person name="Chalk A.M."/>
            <person name="Chiu K.P."/>
            <person name="Choudhary V."/>
            <person name="Christoffels A."/>
            <person name="Clutterbuck D.R."/>
            <person name="Crowe M.L."/>
            <person name="Dalla E."/>
            <person name="Dalrymple B.P."/>
            <person name="de Bono B."/>
            <person name="Della Gatta G."/>
            <person name="di Bernardo D."/>
            <person name="Down T."/>
            <person name="Engstrom P."/>
            <person name="Fagiolini M."/>
            <person name="Faulkner G."/>
            <person name="Fletcher C.F."/>
            <person name="Fukushima T."/>
            <person name="Furuno M."/>
            <person name="Futaki S."/>
            <person name="Gariboldi M."/>
            <person name="Georgii-Hemming P."/>
            <person name="Gingeras T.R."/>
            <person name="Gojobori T."/>
            <person name="Green R.E."/>
            <person name="Gustincich S."/>
            <person name="Harbers M."/>
            <person name="Hayashi Y."/>
            <person name="Hensch T.K."/>
            <person name="Hirokawa N."/>
            <person name="Hill D."/>
            <person name="Huminiecki L."/>
            <person name="Iacono M."/>
            <person name="Ikeo K."/>
            <person name="Iwama A."/>
            <person name="Ishikawa T."/>
            <person name="Jakt M."/>
            <person name="Kanapin A."/>
            <person name="Katoh M."/>
            <person name="Kawasawa Y."/>
            <person name="Kelso J."/>
            <person name="Kitamura H."/>
            <person name="Kitano H."/>
            <person name="Kollias G."/>
            <person name="Krishnan S.P."/>
            <person name="Kruger A."/>
            <person name="Kummerfeld S.K."/>
            <person name="Kurochkin I.V."/>
            <person name="Lareau L.F."/>
            <person name="Lazarevic D."/>
            <person name="Lipovich L."/>
            <person name="Liu J."/>
            <person name="Liuni S."/>
            <person name="McWilliam S."/>
            <person name="Madan Babu M."/>
            <person name="Madera M."/>
            <person name="Marchionni L."/>
            <person name="Matsuda H."/>
            <person name="Matsuzawa S."/>
            <person name="Miki H."/>
            <person name="Mignone F."/>
            <person name="Miyake S."/>
            <person name="Morris K."/>
            <person name="Mottagui-Tabar S."/>
            <person name="Mulder N."/>
            <person name="Nakano N."/>
            <person name="Nakauchi H."/>
            <person name="Ng P."/>
            <person name="Nilsson R."/>
            <person name="Nishiguchi S."/>
            <person name="Nishikawa S."/>
            <person name="Nori F."/>
            <person name="Ohara O."/>
            <person name="Okazaki Y."/>
            <person name="Orlando V."/>
            <person name="Pang K.C."/>
            <person name="Pavan W.J."/>
            <person name="Pavesi G."/>
            <person name="Pesole G."/>
            <person name="Petrovsky N."/>
            <person name="Piazza S."/>
            <person name="Reed J."/>
            <person name="Reid J.F."/>
            <person name="Ring B.Z."/>
            <person name="Ringwald M."/>
            <person name="Rost B."/>
            <person name="Ruan Y."/>
            <person name="Salzberg S.L."/>
            <person name="Sandelin A."/>
            <person name="Schneider C."/>
            <person name="Schoenbach C."/>
            <person name="Sekiguchi K."/>
            <person name="Semple C.A."/>
            <person name="Seno S."/>
            <person name="Sessa L."/>
            <person name="Sheng Y."/>
            <person name="Shibata Y."/>
            <person name="Shimada H."/>
            <person name="Shimada K."/>
            <person name="Silva D."/>
            <person name="Sinclair B."/>
            <person name="Sperling S."/>
            <person name="Stupka E."/>
            <person name="Sugiura K."/>
            <person name="Sultana R."/>
            <person name="Takenaka Y."/>
            <person name="Taki K."/>
            <person name="Tammoja K."/>
            <person name="Tan S.L."/>
            <person name="Tang S."/>
            <person name="Taylor M.S."/>
            <person name="Tegner J."/>
            <person name="Teichmann S.A."/>
            <person name="Ueda H.R."/>
            <person name="van Nimwegen E."/>
            <person name="Verardo R."/>
            <person name="Wei C.L."/>
            <person name="Yagi K."/>
            <person name="Yamanishi H."/>
            <person name="Zabarovsky E."/>
            <person name="Zhu S."/>
            <person name="Zimmer A."/>
            <person name="Hide W."/>
            <person name="Bult C."/>
            <person name="Grimmond S.M."/>
            <person name="Teasdale R.D."/>
            <person name="Liu E.T."/>
            <person name="Brusic V."/>
            <person name="Quackenbush J."/>
            <person name="Wahlestedt C."/>
            <person name="Mattick J.S."/>
            <person name="Hume D.A."/>
            <person name="Kai C."/>
            <person name="Sasaki D."/>
            <person name="Tomaru Y."/>
            <person name="Fukuda S."/>
            <person name="Kanamori-Katayama M."/>
            <person name="Suzuki M."/>
            <person name="Aoki J."/>
            <person name="Arakawa T."/>
            <person name="Iida J."/>
            <person name="Imamura K."/>
            <person name="Itoh M."/>
            <person name="Kato T."/>
            <person name="Kawaji H."/>
            <person name="Kawagashira N."/>
            <person name="Kawashima T."/>
            <person name="Kojima M."/>
            <person name="Kondo S."/>
            <person name="Konno H."/>
            <person name="Nakano K."/>
            <person name="Ninomiya N."/>
            <person name="Nishio T."/>
            <person name="Okada M."/>
            <person name="Plessy C."/>
            <person name="Shibata K."/>
            <person name="Shiraki T."/>
            <person name="Suzuki S."/>
            <person name="Tagami M."/>
            <person name="Waki K."/>
            <person name="Watahiki A."/>
            <person name="Okamura-Oho Y."/>
            <person name="Suzuki H."/>
            <person name="Kawai J."/>
            <person name="Hayashizaki Y."/>
        </authorList>
    </citation>
    <scope>NUCLEOTIDE SEQUENCE [LARGE SCALE MRNA] (ISOFORMS 1 AND 3)</scope>
    <source>
        <strain>C57BL/6J</strain>
        <strain>NOD</strain>
        <tissue>Amnion</tissue>
        <tissue>Pancreas</tissue>
    </source>
</reference>
<reference key="2">
    <citation type="journal article" date="2004" name="Genome Res.">
        <title>The status, quality, and expansion of the NIH full-length cDNA project: the Mammalian Gene Collection (MGC).</title>
        <authorList>
            <consortium name="The MGC Project Team"/>
        </authorList>
    </citation>
    <scope>NUCLEOTIDE SEQUENCE [LARGE SCALE MRNA] (ISOFORM 2)</scope>
    <source>
        <strain>Czech II</strain>
        <tissue>Mammary tumor</tissue>
    </source>
</reference>
<reference key="3">
    <citation type="journal article" date="2010" name="Cell">
        <title>A tissue-specific atlas of mouse protein phosphorylation and expression.</title>
        <authorList>
            <person name="Huttlin E.L."/>
            <person name="Jedrychowski M.P."/>
            <person name="Elias J.E."/>
            <person name="Goswami T."/>
            <person name="Rad R."/>
            <person name="Beausoleil S.A."/>
            <person name="Villen J."/>
            <person name="Haas W."/>
            <person name="Sowa M.E."/>
            <person name="Gygi S.P."/>
        </authorList>
    </citation>
    <scope>IDENTIFICATION BY MASS SPECTROMETRY [LARGE SCALE ANALYSIS]</scope>
    <source>
        <tissue>Brown adipose tissue</tissue>
        <tissue>Liver</tissue>
        <tissue>Pancreas</tissue>
        <tissue>Spleen</tissue>
        <tissue>Testis</tissue>
    </source>
</reference>
<accession>Q8VDS8</accession>
<accession>Q3TDJ0</accession>
<accession>Q9D8T6</accession>
<evidence type="ECO:0000250" key="1"/>
<evidence type="ECO:0000255" key="2"/>
<evidence type="ECO:0000256" key="3">
    <source>
        <dbReference type="SAM" id="MobiDB-lite"/>
    </source>
</evidence>
<evidence type="ECO:0000303" key="4">
    <source>
    </source>
</evidence>
<evidence type="ECO:0000303" key="5">
    <source>
    </source>
</evidence>
<evidence type="ECO:0000305" key="6"/>
<keyword id="KW-0025">Alternative splicing</keyword>
<keyword id="KW-0175">Coiled coil</keyword>
<keyword id="KW-0256">Endoplasmic reticulum</keyword>
<keyword id="KW-0931">ER-Golgi transport</keyword>
<keyword id="KW-0333">Golgi apparatus</keyword>
<keyword id="KW-0472">Membrane</keyword>
<keyword id="KW-0653">Protein transport</keyword>
<keyword id="KW-1185">Reference proteome</keyword>
<keyword id="KW-0812">Transmembrane</keyword>
<keyword id="KW-1133">Transmembrane helix</keyword>
<keyword id="KW-0813">Transport</keyword>
<proteinExistence type="evidence at protein level"/>